<sequence>MLGPQVWSSVRQGLSRSLSRNVGVWASGEGKKVDIAGIYPPVTTPFTATAEVDYGKLEENLHKLGTFPFRGFVVQGSNGEFPFLTSSERLEVVSRVRQAMPKNRLLLAGSGCESTQATVEMTVSMAQVGADAAMVVTPCYYRGRMSSAALIHHYTKVADLSPIPVVLYSVPANTGLDLPVDAVVTLSQHPNIVGMKDSGGDVTRIGLIVHKTRKQDFQVLAGSAGFLMASYALGAVGGVCALANVLGAQVCQLERLCCTGQWEDAQKLQHRLIEPNAAVTRRFGIPGLKKIMDWFGYYGGPCRAPLQELSPAEEEALRMDFTSNGWL</sequence>
<reference key="1">
    <citation type="journal article" date="2004" name="Nat. Genet.">
        <title>Complete sequencing and characterization of 21,243 full-length human cDNAs.</title>
        <authorList>
            <person name="Ota T."/>
            <person name="Suzuki Y."/>
            <person name="Nishikawa T."/>
            <person name="Otsuki T."/>
            <person name="Sugiyama T."/>
            <person name="Irie R."/>
            <person name="Wakamatsu A."/>
            <person name="Hayashi K."/>
            <person name="Sato H."/>
            <person name="Nagai K."/>
            <person name="Kimura K."/>
            <person name="Makita H."/>
            <person name="Sekine M."/>
            <person name="Obayashi M."/>
            <person name="Nishi T."/>
            <person name="Shibahara T."/>
            <person name="Tanaka T."/>
            <person name="Ishii S."/>
            <person name="Yamamoto J."/>
            <person name="Saito K."/>
            <person name="Kawai Y."/>
            <person name="Isono Y."/>
            <person name="Nakamura Y."/>
            <person name="Nagahari K."/>
            <person name="Murakami K."/>
            <person name="Yasuda T."/>
            <person name="Iwayanagi T."/>
            <person name="Wagatsuma M."/>
            <person name="Shiratori A."/>
            <person name="Sudo H."/>
            <person name="Hosoiri T."/>
            <person name="Kaku Y."/>
            <person name="Kodaira H."/>
            <person name="Kondo H."/>
            <person name="Sugawara M."/>
            <person name="Takahashi M."/>
            <person name="Kanda K."/>
            <person name="Yokoi T."/>
            <person name="Furuya T."/>
            <person name="Kikkawa E."/>
            <person name="Omura Y."/>
            <person name="Abe K."/>
            <person name="Kamihara K."/>
            <person name="Katsuta N."/>
            <person name="Sato K."/>
            <person name="Tanikawa M."/>
            <person name="Yamazaki M."/>
            <person name="Ninomiya K."/>
            <person name="Ishibashi T."/>
            <person name="Yamashita H."/>
            <person name="Murakawa K."/>
            <person name="Fujimori K."/>
            <person name="Tanai H."/>
            <person name="Kimata M."/>
            <person name="Watanabe M."/>
            <person name="Hiraoka S."/>
            <person name="Chiba Y."/>
            <person name="Ishida S."/>
            <person name="Ono Y."/>
            <person name="Takiguchi S."/>
            <person name="Watanabe S."/>
            <person name="Yosida M."/>
            <person name="Hotuta T."/>
            <person name="Kusano J."/>
            <person name="Kanehori K."/>
            <person name="Takahashi-Fujii A."/>
            <person name="Hara H."/>
            <person name="Tanase T.-O."/>
            <person name="Nomura Y."/>
            <person name="Togiya S."/>
            <person name="Komai F."/>
            <person name="Hara R."/>
            <person name="Takeuchi K."/>
            <person name="Arita M."/>
            <person name="Imose N."/>
            <person name="Musashino K."/>
            <person name="Yuuki H."/>
            <person name="Oshima A."/>
            <person name="Sasaki N."/>
            <person name="Aotsuka S."/>
            <person name="Yoshikawa Y."/>
            <person name="Matsunawa H."/>
            <person name="Ichihara T."/>
            <person name="Shiohata N."/>
            <person name="Sano S."/>
            <person name="Moriya S."/>
            <person name="Momiyama H."/>
            <person name="Satoh N."/>
            <person name="Takami S."/>
            <person name="Terashima Y."/>
            <person name="Suzuki O."/>
            <person name="Nakagawa S."/>
            <person name="Senoh A."/>
            <person name="Mizoguchi H."/>
            <person name="Goto Y."/>
            <person name="Shimizu F."/>
            <person name="Wakebe H."/>
            <person name="Hishigaki H."/>
            <person name="Watanabe T."/>
            <person name="Sugiyama A."/>
            <person name="Takemoto M."/>
            <person name="Kawakami B."/>
            <person name="Yamazaki M."/>
            <person name="Watanabe K."/>
            <person name="Kumagai A."/>
            <person name="Itakura S."/>
            <person name="Fukuzumi Y."/>
            <person name="Fujimori Y."/>
            <person name="Komiyama M."/>
            <person name="Tashiro H."/>
            <person name="Tanigami A."/>
            <person name="Fujiwara T."/>
            <person name="Ono T."/>
            <person name="Yamada K."/>
            <person name="Fujii Y."/>
            <person name="Ozaki K."/>
            <person name="Hirao M."/>
            <person name="Ohmori Y."/>
            <person name="Kawabata A."/>
            <person name="Hikiji T."/>
            <person name="Kobatake N."/>
            <person name="Inagaki H."/>
            <person name="Ikema Y."/>
            <person name="Okamoto S."/>
            <person name="Okitani R."/>
            <person name="Kawakami T."/>
            <person name="Noguchi S."/>
            <person name="Itoh T."/>
            <person name="Shigeta K."/>
            <person name="Senba T."/>
            <person name="Matsumura K."/>
            <person name="Nakajima Y."/>
            <person name="Mizuno T."/>
            <person name="Morinaga M."/>
            <person name="Sasaki M."/>
            <person name="Togashi T."/>
            <person name="Oyama M."/>
            <person name="Hata H."/>
            <person name="Watanabe M."/>
            <person name="Komatsu T."/>
            <person name="Mizushima-Sugano J."/>
            <person name="Satoh T."/>
            <person name="Shirai Y."/>
            <person name="Takahashi Y."/>
            <person name="Nakagawa K."/>
            <person name="Okumura K."/>
            <person name="Nagase T."/>
            <person name="Nomura N."/>
            <person name="Kikuchi H."/>
            <person name="Masuho Y."/>
            <person name="Yamashita R."/>
            <person name="Nakai K."/>
            <person name="Yada T."/>
            <person name="Nakamura Y."/>
            <person name="Ohara O."/>
            <person name="Isogai T."/>
            <person name="Sugano S."/>
        </authorList>
    </citation>
    <scope>NUCLEOTIDE SEQUENCE [LARGE SCALE MRNA] (ISOFORM 1)</scope>
    <source>
        <tissue>Urinary bladder</tissue>
    </source>
</reference>
<reference key="2">
    <citation type="journal article" date="2004" name="Nature">
        <title>The DNA sequence and comparative analysis of human chromosome 10.</title>
        <authorList>
            <person name="Deloukas P."/>
            <person name="Earthrowl M.E."/>
            <person name="Grafham D.V."/>
            <person name="Rubenfield M."/>
            <person name="French L."/>
            <person name="Steward C.A."/>
            <person name="Sims S.K."/>
            <person name="Jones M.C."/>
            <person name="Searle S."/>
            <person name="Scott C."/>
            <person name="Howe K."/>
            <person name="Hunt S.E."/>
            <person name="Andrews T.D."/>
            <person name="Gilbert J.G.R."/>
            <person name="Swarbreck D."/>
            <person name="Ashurst J.L."/>
            <person name="Taylor A."/>
            <person name="Battles J."/>
            <person name="Bird C.P."/>
            <person name="Ainscough R."/>
            <person name="Almeida J.P."/>
            <person name="Ashwell R.I.S."/>
            <person name="Ambrose K.D."/>
            <person name="Babbage A.K."/>
            <person name="Bagguley C.L."/>
            <person name="Bailey J."/>
            <person name="Banerjee R."/>
            <person name="Bates K."/>
            <person name="Beasley H."/>
            <person name="Bray-Allen S."/>
            <person name="Brown A.J."/>
            <person name="Brown J.Y."/>
            <person name="Burford D.C."/>
            <person name="Burrill W."/>
            <person name="Burton J."/>
            <person name="Cahill P."/>
            <person name="Camire D."/>
            <person name="Carter N.P."/>
            <person name="Chapman J.C."/>
            <person name="Clark S.Y."/>
            <person name="Clarke G."/>
            <person name="Clee C.M."/>
            <person name="Clegg S."/>
            <person name="Corby N."/>
            <person name="Coulson A."/>
            <person name="Dhami P."/>
            <person name="Dutta I."/>
            <person name="Dunn M."/>
            <person name="Faulkner L."/>
            <person name="Frankish A."/>
            <person name="Frankland J.A."/>
            <person name="Garner P."/>
            <person name="Garnett J."/>
            <person name="Gribble S."/>
            <person name="Griffiths C."/>
            <person name="Grocock R."/>
            <person name="Gustafson E."/>
            <person name="Hammond S."/>
            <person name="Harley J.L."/>
            <person name="Hart E."/>
            <person name="Heath P.D."/>
            <person name="Ho T.P."/>
            <person name="Hopkins B."/>
            <person name="Horne J."/>
            <person name="Howden P.J."/>
            <person name="Huckle E."/>
            <person name="Hynds C."/>
            <person name="Johnson C."/>
            <person name="Johnson D."/>
            <person name="Kana A."/>
            <person name="Kay M."/>
            <person name="Kimberley A.M."/>
            <person name="Kershaw J.K."/>
            <person name="Kokkinaki M."/>
            <person name="Laird G.K."/>
            <person name="Lawlor S."/>
            <person name="Lee H.M."/>
            <person name="Leongamornlert D.A."/>
            <person name="Laird G."/>
            <person name="Lloyd C."/>
            <person name="Lloyd D.M."/>
            <person name="Loveland J."/>
            <person name="Lovell J."/>
            <person name="McLaren S."/>
            <person name="McLay K.E."/>
            <person name="McMurray A."/>
            <person name="Mashreghi-Mohammadi M."/>
            <person name="Matthews L."/>
            <person name="Milne S."/>
            <person name="Nickerson T."/>
            <person name="Nguyen M."/>
            <person name="Overton-Larty E."/>
            <person name="Palmer S.A."/>
            <person name="Pearce A.V."/>
            <person name="Peck A.I."/>
            <person name="Pelan S."/>
            <person name="Phillimore B."/>
            <person name="Porter K."/>
            <person name="Rice C.M."/>
            <person name="Rogosin A."/>
            <person name="Ross M.T."/>
            <person name="Sarafidou T."/>
            <person name="Sehra H.K."/>
            <person name="Shownkeen R."/>
            <person name="Skuce C.D."/>
            <person name="Smith M."/>
            <person name="Standring L."/>
            <person name="Sycamore N."/>
            <person name="Tester J."/>
            <person name="Thorpe A."/>
            <person name="Torcasso W."/>
            <person name="Tracey A."/>
            <person name="Tromans A."/>
            <person name="Tsolas J."/>
            <person name="Wall M."/>
            <person name="Walsh J."/>
            <person name="Wang H."/>
            <person name="Weinstock K."/>
            <person name="West A.P."/>
            <person name="Willey D.L."/>
            <person name="Whitehead S.L."/>
            <person name="Wilming L."/>
            <person name="Wray P.W."/>
            <person name="Young L."/>
            <person name="Chen Y."/>
            <person name="Lovering R.C."/>
            <person name="Moschonas N.K."/>
            <person name="Siebert R."/>
            <person name="Fechtel K."/>
            <person name="Bentley D."/>
            <person name="Durbin R.M."/>
            <person name="Hubbard T."/>
            <person name="Doucette-Stamm L."/>
            <person name="Beck S."/>
            <person name="Smith D.R."/>
            <person name="Rogers J."/>
        </authorList>
    </citation>
    <scope>NUCLEOTIDE SEQUENCE [LARGE SCALE GENOMIC DNA]</scope>
</reference>
<reference key="3">
    <citation type="submission" date="2005-09" db="EMBL/GenBank/DDBJ databases">
        <authorList>
            <person name="Mural R.J."/>
            <person name="Istrail S."/>
            <person name="Sutton G.G."/>
            <person name="Florea L."/>
            <person name="Halpern A.L."/>
            <person name="Mobarry C.M."/>
            <person name="Lippert R."/>
            <person name="Walenz B."/>
            <person name="Shatkay H."/>
            <person name="Dew I."/>
            <person name="Miller J.R."/>
            <person name="Flanigan M.J."/>
            <person name="Edwards N.J."/>
            <person name="Bolanos R."/>
            <person name="Fasulo D."/>
            <person name="Halldorsson B.V."/>
            <person name="Hannenhalli S."/>
            <person name="Turner R."/>
            <person name="Yooseph S."/>
            <person name="Lu F."/>
            <person name="Nusskern D.R."/>
            <person name="Shue B.C."/>
            <person name="Zheng X.H."/>
            <person name="Zhong F."/>
            <person name="Delcher A.L."/>
            <person name="Huson D.H."/>
            <person name="Kravitz S.A."/>
            <person name="Mouchard L."/>
            <person name="Reinert K."/>
            <person name="Remington K.A."/>
            <person name="Clark A.G."/>
            <person name="Waterman M.S."/>
            <person name="Eichler E.E."/>
            <person name="Adams M.D."/>
            <person name="Hunkapiller M.W."/>
            <person name="Myers E.W."/>
            <person name="Venter J.C."/>
        </authorList>
    </citation>
    <scope>NUCLEOTIDE SEQUENCE [LARGE SCALE GENOMIC DNA]</scope>
</reference>
<reference key="4">
    <citation type="journal article" date="2004" name="Genome Res.">
        <title>The status, quality, and expansion of the NIH full-length cDNA project: the Mammalian Gene Collection (MGC).</title>
        <authorList>
            <consortium name="The MGC Project Team"/>
        </authorList>
    </citation>
    <scope>NUCLEOTIDE SEQUENCE [LARGE SCALE MRNA] (ISOFORMS 1 AND 2)</scope>
    <source>
        <tissue>Hippocampus</tissue>
        <tissue>Kidney</tissue>
    </source>
</reference>
<reference key="5">
    <citation type="submission" date="2001-04" db="EMBL/GenBank/DDBJ databases">
        <title>Homo sapiens gene 569272.</title>
        <authorList>
            <person name="Moschonas N.K."/>
        </authorList>
    </citation>
    <scope>NUCLEOTIDE SEQUENCE [GENOMIC DNA] OF 1-279 (ISOFORM 1)</scope>
</reference>
<reference key="6">
    <citation type="journal article" date="2010" name="Am. J. Hum. Genet.">
        <title>Mutations in DHDPSL are responsible for primary hyperoxaluria type III.</title>
        <authorList>
            <person name="Belostotsky R."/>
            <person name="Seboun E."/>
            <person name="Idelson G.H."/>
            <person name="Milliner D.S."/>
            <person name="Becker-Cohen R."/>
            <person name="Rinat C."/>
            <person name="Monico C.G."/>
            <person name="Feinstein S."/>
            <person name="Ben-Shalom E."/>
            <person name="Magen D."/>
            <person name="Weissman I."/>
            <person name="Charon C."/>
            <person name="Frishberg Y."/>
        </authorList>
    </citation>
    <scope>FUNCTION</scope>
    <scope>VARIANTS HP3 GLY-257; VAL-287 AND GLU-315 DEL</scope>
</reference>
<reference key="7">
    <citation type="journal article" date="2014" name="J. Proteomics">
        <title>An enzyme assisted RP-RPLC approach for in-depth analysis of human liver phosphoproteome.</title>
        <authorList>
            <person name="Bian Y."/>
            <person name="Song C."/>
            <person name="Cheng K."/>
            <person name="Dong M."/>
            <person name="Wang F."/>
            <person name="Huang J."/>
            <person name="Sun D."/>
            <person name="Wang L."/>
            <person name="Ye M."/>
            <person name="Zou H."/>
        </authorList>
    </citation>
    <scope>IDENTIFICATION BY MASS SPECTROMETRY [LARGE SCALE ANALYSIS]</scope>
    <source>
        <tissue>Liver</tissue>
    </source>
</reference>
<reference key="8">
    <citation type="journal article" date="2011" name="PLoS ONE">
        <title>Structural and biochemical studies of human 4-hydroxy-2-oxoglutarate aldolase: implications for hydroxyproline metabolism in primary hyperoxaluria.</title>
        <authorList>
            <person name="Riedel T.J."/>
            <person name="Johnson L.C."/>
            <person name="Knight J."/>
            <person name="Hantgan R.R."/>
            <person name="Holmes R.P."/>
            <person name="Lowther W.T."/>
        </authorList>
    </citation>
    <scope>X-RAY CRYSTALLOGRAPHY (1.97 ANGSTROMS) OF 26-327 IN COMPLEX WITH PYRUVATE</scope>
    <scope>SUBUNIT</scope>
    <scope>ACTIVE SITE</scope>
    <scope>MUTAGENESIS OF SER-77; ASN-78; TYR-140; TYR-168; LYS-196 AND SER-198</scope>
    <scope>FUNCTION</scope>
    <scope>CATALYTIC ACTIVITY</scope>
</reference>
<gene>
    <name type="primary">HOGA1</name>
    <name type="synonym">C10orf65</name>
    <name type="synonym">DHDPSL</name>
</gene>
<protein>
    <recommendedName>
        <fullName>4-hydroxy-2-oxoglutarate aldolase, mitochondrial</fullName>
        <ecNumber>4.1.3.16</ecNumber>
    </recommendedName>
    <alternativeName>
        <fullName>Dihydrodipicolinate synthase-like</fullName>
        <shortName>DHDPS-like protein</shortName>
    </alternativeName>
    <alternativeName>
        <fullName>Probable 2-keto-4-hydroxyglutarate aldolase</fullName>
        <shortName>Probable KHG-aldolase</shortName>
    </alternativeName>
    <alternativeName>
        <fullName>Protein 569272</fullName>
    </alternativeName>
</protein>
<organism>
    <name type="scientific">Homo sapiens</name>
    <name type="common">Human</name>
    <dbReference type="NCBI Taxonomy" id="9606"/>
    <lineage>
        <taxon>Eukaryota</taxon>
        <taxon>Metazoa</taxon>
        <taxon>Chordata</taxon>
        <taxon>Craniata</taxon>
        <taxon>Vertebrata</taxon>
        <taxon>Euteleostomi</taxon>
        <taxon>Mammalia</taxon>
        <taxon>Eutheria</taxon>
        <taxon>Euarchontoglires</taxon>
        <taxon>Primates</taxon>
        <taxon>Haplorrhini</taxon>
        <taxon>Catarrhini</taxon>
        <taxon>Hominidae</taxon>
        <taxon>Homo</taxon>
    </lineage>
</organism>
<keyword id="KW-0002">3D-structure</keyword>
<keyword id="KW-0025">Alternative splicing</keyword>
<keyword id="KW-0225">Disease variant</keyword>
<keyword id="KW-0456">Lyase</keyword>
<keyword id="KW-0496">Mitochondrion</keyword>
<keyword id="KW-1267">Proteomics identification</keyword>
<keyword id="KW-1185">Reference proteome</keyword>
<keyword id="KW-0704">Schiff base</keyword>
<keyword id="KW-0809">Transit peptide</keyword>
<dbReference type="EC" id="4.1.3.16"/>
<dbReference type="EMBL" id="AK289440">
    <property type="protein sequence ID" value="BAF82129.1"/>
    <property type="molecule type" value="mRNA"/>
</dbReference>
<dbReference type="EMBL" id="AL355315">
    <property type="status" value="NOT_ANNOTATED_CDS"/>
    <property type="molecule type" value="Genomic_DNA"/>
</dbReference>
<dbReference type="EMBL" id="CH471066">
    <property type="protein sequence ID" value="EAW49912.1"/>
    <property type="molecule type" value="Genomic_DNA"/>
</dbReference>
<dbReference type="EMBL" id="BC011916">
    <property type="protein sequence ID" value="AAH11916.1"/>
    <property type="molecule type" value="mRNA"/>
</dbReference>
<dbReference type="EMBL" id="BC045550">
    <property type="protein sequence ID" value="AAH45550.1"/>
    <property type="molecule type" value="mRNA"/>
</dbReference>
<dbReference type="EMBL" id="BC057821">
    <property type="protein sequence ID" value="AAH57821.1"/>
    <property type="molecule type" value="mRNA"/>
</dbReference>
<dbReference type="EMBL" id="AJ312051">
    <property type="protein sequence ID" value="CAC84901.1"/>
    <property type="status" value="ALT_SEQ"/>
    <property type="molecule type" value="Genomic_DNA"/>
</dbReference>
<dbReference type="CCDS" id="CCDS44469.1">
    <molecule id="Q86XE5-3"/>
</dbReference>
<dbReference type="CCDS" id="CCDS7467.1">
    <molecule id="Q86XE5-1"/>
</dbReference>
<dbReference type="RefSeq" id="NP_001128142.1">
    <molecule id="Q86XE5-3"/>
    <property type="nucleotide sequence ID" value="NM_001134670.2"/>
</dbReference>
<dbReference type="RefSeq" id="NP_612422.2">
    <molecule id="Q86XE5-1"/>
    <property type="nucleotide sequence ID" value="NM_138413.3"/>
</dbReference>
<dbReference type="PDB" id="3S5N">
    <property type="method" value="X-ray"/>
    <property type="resolution" value="2.50 A"/>
    <property type="chains" value="A=26-327"/>
</dbReference>
<dbReference type="PDB" id="3S5O">
    <property type="method" value="X-ray"/>
    <property type="resolution" value="1.97 A"/>
    <property type="chains" value="A=26-327"/>
</dbReference>
<dbReference type="PDBsum" id="3S5N"/>
<dbReference type="PDBsum" id="3S5O"/>
<dbReference type="SMR" id="Q86XE5"/>
<dbReference type="BioGRID" id="125207">
    <property type="interactions" value="31"/>
</dbReference>
<dbReference type="FunCoup" id="Q86XE5">
    <property type="interactions" value="576"/>
</dbReference>
<dbReference type="IntAct" id="Q86XE5">
    <property type="interactions" value="26"/>
</dbReference>
<dbReference type="STRING" id="9606.ENSP00000359680"/>
<dbReference type="BindingDB" id="Q86XE5"/>
<dbReference type="ChEMBL" id="CHEMBL5996"/>
<dbReference type="GlyGen" id="Q86XE5">
    <property type="glycosylation" value="3 sites, 1 O-linked glycan (3 sites)"/>
</dbReference>
<dbReference type="PhosphoSitePlus" id="Q86XE5"/>
<dbReference type="SwissPalm" id="Q86XE5"/>
<dbReference type="BioMuta" id="HOGA1"/>
<dbReference type="DMDM" id="74750531"/>
<dbReference type="jPOST" id="Q86XE5"/>
<dbReference type="MassIVE" id="Q86XE5"/>
<dbReference type="PaxDb" id="9606-ENSP00000359680"/>
<dbReference type="PeptideAtlas" id="Q86XE5"/>
<dbReference type="ProteomicsDB" id="70271">
    <molecule id="Q86XE5-1"/>
</dbReference>
<dbReference type="ProteomicsDB" id="70272">
    <molecule id="Q86XE5-3"/>
</dbReference>
<dbReference type="Antibodypedia" id="55095">
    <property type="antibodies" value="15 antibodies from 8 providers"/>
</dbReference>
<dbReference type="DNASU" id="112817"/>
<dbReference type="Ensembl" id="ENST00000370646.9">
    <molecule id="Q86XE5-1"/>
    <property type="protein sequence ID" value="ENSP00000359680.4"/>
    <property type="gene ID" value="ENSG00000241935.9"/>
</dbReference>
<dbReference type="Ensembl" id="ENST00000370647.8">
    <molecule id="Q86XE5-3"/>
    <property type="protein sequence ID" value="ENSP00000359681.4"/>
    <property type="gene ID" value="ENSG00000241935.9"/>
</dbReference>
<dbReference type="GeneID" id="112817"/>
<dbReference type="KEGG" id="hsa:112817"/>
<dbReference type="MANE-Select" id="ENST00000370646.9">
    <property type="protein sequence ID" value="ENSP00000359680.4"/>
    <property type="RefSeq nucleotide sequence ID" value="NM_138413.4"/>
    <property type="RefSeq protein sequence ID" value="NP_612422.2"/>
</dbReference>
<dbReference type="UCSC" id="uc001kny.4">
    <molecule id="Q86XE5-1"/>
    <property type="organism name" value="human"/>
</dbReference>
<dbReference type="AGR" id="HGNC:25155"/>
<dbReference type="CTD" id="112817"/>
<dbReference type="DisGeNET" id="112817"/>
<dbReference type="GeneCards" id="HOGA1"/>
<dbReference type="GeneReviews" id="HOGA1"/>
<dbReference type="HGNC" id="HGNC:25155">
    <property type="gene designation" value="HOGA1"/>
</dbReference>
<dbReference type="HPA" id="ENSG00000241935">
    <property type="expression patterns" value="Tissue enhanced (kidney, liver)"/>
</dbReference>
<dbReference type="MalaCards" id="HOGA1"/>
<dbReference type="MIM" id="613597">
    <property type="type" value="gene"/>
</dbReference>
<dbReference type="MIM" id="613616">
    <property type="type" value="phenotype"/>
</dbReference>
<dbReference type="neXtProt" id="NX_Q86XE5"/>
<dbReference type="OpenTargets" id="ENSG00000241935"/>
<dbReference type="Orphanet" id="93600">
    <property type="disease" value="Primary hyperoxaluria type 3"/>
</dbReference>
<dbReference type="PharmGKB" id="PA165548441"/>
<dbReference type="VEuPathDB" id="HostDB:ENSG00000241935"/>
<dbReference type="eggNOG" id="ENOG502QWNS">
    <property type="taxonomic scope" value="Eukaryota"/>
</dbReference>
<dbReference type="GeneTree" id="ENSGT00530000063604"/>
<dbReference type="HOGENOM" id="CLU_1668837_0_0_1"/>
<dbReference type="InParanoid" id="Q86XE5"/>
<dbReference type="OMA" id="GMDACVP"/>
<dbReference type="OrthoDB" id="191315at2759"/>
<dbReference type="PAN-GO" id="Q86XE5">
    <property type="GO annotations" value="3 GO annotations based on evolutionary models"/>
</dbReference>
<dbReference type="PhylomeDB" id="Q86XE5"/>
<dbReference type="TreeFam" id="TF324600"/>
<dbReference type="BioCyc" id="MetaCyc:G66-31234-MONOMER"/>
<dbReference type="BRENDA" id="4.1.3.16">
    <property type="organism ID" value="2681"/>
</dbReference>
<dbReference type="PathwayCommons" id="Q86XE5"/>
<dbReference type="Reactome" id="R-HSA-389661">
    <property type="pathway name" value="Glyoxylate metabolism and glycine degradation"/>
</dbReference>
<dbReference type="SignaLink" id="Q86XE5"/>
<dbReference type="BioGRID-ORCS" id="112817">
    <property type="hits" value="9 hits in 1146 CRISPR screens"/>
</dbReference>
<dbReference type="ChiTaRS" id="HOGA1">
    <property type="organism name" value="human"/>
</dbReference>
<dbReference type="EvolutionaryTrace" id="Q86XE5"/>
<dbReference type="GenomeRNAi" id="112817"/>
<dbReference type="Pharos" id="Q86XE5">
    <property type="development level" value="Tbio"/>
</dbReference>
<dbReference type="PRO" id="PR:Q86XE5"/>
<dbReference type="Proteomes" id="UP000005640">
    <property type="component" value="Chromosome 10"/>
</dbReference>
<dbReference type="RNAct" id="Q86XE5">
    <property type="molecule type" value="protein"/>
</dbReference>
<dbReference type="Bgee" id="ENSG00000241935">
    <property type="expression patterns" value="Expressed in kidney epithelium and 105 other cell types or tissues"/>
</dbReference>
<dbReference type="ExpressionAtlas" id="Q86XE5">
    <property type="expression patterns" value="baseline and differential"/>
</dbReference>
<dbReference type="GO" id="GO:0005759">
    <property type="term" value="C:mitochondrial matrix"/>
    <property type="evidence" value="ECO:0000304"/>
    <property type="project" value="Reactome"/>
</dbReference>
<dbReference type="GO" id="GO:0005739">
    <property type="term" value="C:mitochondrion"/>
    <property type="evidence" value="ECO:0006056"/>
    <property type="project" value="FlyBase"/>
</dbReference>
<dbReference type="GO" id="GO:0106009">
    <property type="term" value="F:(4S)-4-hydroxy-2-oxoglutarate aldolase activity"/>
    <property type="evidence" value="ECO:0007669"/>
    <property type="project" value="RHEA"/>
</dbReference>
<dbReference type="GO" id="GO:0008700">
    <property type="term" value="F:(R,S)-4-hydroxy-2-oxoglutarate aldolase activity"/>
    <property type="evidence" value="ECO:0000314"/>
    <property type="project" value="BHF-UCL"/>
</dbReference>
<dbReference type="GO" id="GO:0042803">
    <property type="term" value="F:protein homodimerization activity"/>
    <property type="evidence" value="ECO:0000314"/>
    <property type="project" value="BHF-UCL"/>
</dbReference>
<dbReference type="GO" id="GO:0019470">
    <property type="term" value="P:4-hydroxyproline catabolic process"/>
    <property type="evidence" value="ECO:0000314"/>
    <property type="project" value="BHF-UCL"/>
</dbReference>
<dbReference type="GO" id="GO:0009436">
    <property type="term" value="P:glyoxylate catabolic process"/>
    <property type="evidence" value="ECO:0000315"/>
    <property type="project" value="UniProtKB"/>
</dbReference>
<dbReference type="GO" id="GO:0046487">
    <property type="term" value="P:glyoxylate metabolic process"/>
    <property type="evidence" value="ECO:0000314"/>
    <property type="project" value="BHF-UCL"/>
</dbReference>
<dbReference type="GO" id="GO:0033609">
    <property type="term" value="P:oxalate metabolic process"/>
    <property type="evidence" value="ECO:0000315"/>
    <property type="project" value="BHF-UCL"/>
</dbReference>
<dbReference type="GO" id="GO:0042866">
    <property type="term" value="P:pyruvate biosynthetic process"/>
    <property type="evidence" value="ECO:0000314"/>
    <property type="project" value="BHF-UCL"/>
</dbReference>
<dbReference type="CDD" id="cd00408">
    <property type="entry name" value="DHDPS-like"/>
    <property type="match status" value="1"/>
</dbReference>
<dbReference type="FunFam" id="3.20.20.70:FF:000153">
    <property type="entry name" value="4-hydroxy-2-oxoglutarate aldolase, mitochondrial isoform X1"/>
    <property type="match status" value="1"/>
</dbReference>
<dbReference type="Gene3D" id="3.20.20.70">
    <property type="entry name" value="Aldolase class I"/>
    <property type="match status" value="1"/>
</dbReference>
<dbReference type="InterPro" id="IPR013785">
    <property type="entry name" value="Aldolase_TIM"/>
</dbReference>
<dbReference type="InterPro" id="IPR002220">
    <property type="entry name" value="DapA-like"/>
</dbReference>
<dbReference type="InterPro" id="IPR020625">
    <property type="entry name" value="Schiff_base-form_aldolases_AS"/>
</dbReference>
<dbReference type="PANTHER" id="PTHR12128:SF66">
    <property type="entry name" value="4-HYDROXY-2-OXOGLUTARATE ALDOLASE, MITOCHONDRIAL"/>
    <property type="match status" value="1"/>
</dbReference>
<dbReference type="PANTHER" id="PTHR12128">
    <property type="entry name" value="DIHYDRODIPICOLINATE SYNTHASE"/>
    <property type="match status" value="1"/>
</dbReference>
<dbReference type="Pfam" id="PF00701">
    <property type="entry name" value="DHDPS"/>
    <property type="match status" value="1"/>
</dbReference>
<dbReference type="PIRSF" id="PIRSF001365">
    <property type="entry name" value="DHDPS"/>
    <property type="match status" value="1"/>
</dbReference>
<dbReference type="PRINTS" id="PR00146">
    <property type="entry name" value="DHPICSNTHASE"/>
</dbReference>
<dbReference type="SMART" id="SM01130">
    <property type="entry name" value="DHDPS"/>
    <property type="match status" value="1"/>
</dbReference>
<dbReference type="SUPFAM" id="SSF51569">
    <property type="entry name" value="Aldolase"/>
    <property type="match status" value="1"/>
</dbReference>
<dbReference type="PROSITE" id="PS00666">
    <property type="entry name" value="DHDPS_2"/>
    <property type="match status" value="1"/>
</dbReference>
<evidence type="ECO:0000250" key="1"/>
<evidence type="ECO:0000250" key="2">
    <source>
        <dbReference type="UniProtKB" id="Q0P5I5"/>
    </source>
</evidence>
<evidence type="ECO:0000269" key="3">
    <source>
    </source>
</evidence>
<evidence type="ECO:0000269" key="4">
    <source>
    </source>
</evidence>
<evidence type="ECO:0000303" key="5">
    <source>
    </source>
</evidence>
<evidence type="ECO:0000305" key="6"/>
<evidence type="ECO:0007829" key="7">
    <source>
        <dbReference type="PDB" id="3S5O"/>
    </source>
</evidence>
<accession>Q86XE5</accession>
<accession>A8K075</accession>
<accession>Q5T680</accession>
<accession>Q5T684</accession>
<accession>Q711P0</accession>
<accession>Q8N9F2</accession>
<accession>Q96EV5</accession>
<feature type="transit peptide" description="Mitochondrion" evidence="2">
    <location>
        <begin position="1"/>
        <end position="25"/>
    </location>
</feature>
<feature type="chain" id="PRO_0000273346" description="4-hydroxy-2-oxoglutarate aldolase, mitochondrial">
    <location>
        <begin position="26"/>
        <end position="327"/>
    </location>
</feature>
<feature type="active site" description="Schiff-base intermediate with substrate" evidence="4">
    <location>
        <position position="196"/>
    </location>
</feature>
<feature type="binding site">
    <location>
        <begin position="77"/>
        <end position="78"/>
    </location>
    <ligand>
        <name>substrate</name>
    </ligand>
</feature>
<feature type="binding site">
    <location>
        <position position="198"/>
    </location>
    <ligand>
        <name>substrate</name>
    </ligand>
</feature>
<feature type="binding site">
    <location>
        <position position="222"/>
    </location>
    <ligand>
        <name>substrate</name>
    </ligand>
</feature>
<feature type="site" description="Involved in proton transfer during cleavage">
    <location>
        <position position="168"/>
    </location>
</feature>
<feature type="splice variant" id="VSP_022515" description="In isoform 2." evidence="5">
    <location>
        <begin position="71"/>
        <end position="233"/>
    </location>
</feature>
<feature type="sequence variant" id="VAR_064035" description="In HP3; dbSNP:rs267606764." evidence="3">
    <original>C</original>
    <variation>G</variation>
    <location>
        <position position="257"/>
    </location>
</feature>
<feature type="sequence variant" id="VAR_064036" description="In HP3; dbSNP:rs138207257." evidence="3">
    <original>G</original>
    <variation>V</variation>
    <location>
        <position position="287"/>
    </location>
</feature>
<feature type="sequence variant" id="VAR_064037" description="In HP3." evidence="3">
    <location>
        <position position="315"/>
    </location>
</feature>
<feature type="mutagenesis site" description="2-fold decrease in kcat and a nearly 8-fold increase in KM." evidence="4">
    <original>S</original>
    <variation>A</variation>
    <location>
        <position position="77"/>
    </location>
</feature>
<feature type="mutagenesis site" description="Significant loss of activity." evidence="4">
    <original>S</original>
    <variation>T</variation>
    <location>
        <position position="77"/>
    </location>
</feature>
<feature type="mutagenesis site" description="6-fold increase in KM." evidence="4">
    <original>N</original>
    <variation>A</variation>
    <location>
        <position position="78"/>
    </location>
</feature>
<feature type="mutagenesis site" description="25-fold increase in KM." evidence="4">
    <original>N</original>
    <variation>Q</variation>
    <location>
        <position position="78"/>
    </location>
</feature>
<feature type="mutagenesis site" description="No change in activity." evidence="4">
    <original>Y</original>
    <variation>F</variation>
    <location>
        <position position="140"/>
    </location>
</feature>
<feature type="mutagenesis site" description="No enzymatic activity." evidence="4">
    <original>Y</original>
    <variation>F</variation>
    <location>
        <position position="168"/>
    </location>
</feature>
<feature type="mutagenesis site" description="No enzymatic activity." evidence="4">
    <original>K</original>
    <variation>A</variation>
    <location>
        <position position="196"/>
    </location>
</feature>
<feature type="mutagenesis site" description="2.5-fold decrease in kcat and 4.2 fold increase in KM." evidence="4">
    <original>S</original>
    <variation>A</variation>
    <location>
        <position position="198"/>
    </location>
</feature>
<feature type="mutagenesis site" description="7-fold increase in KM." evidence="4">
    <original>S</original>
    <variation>T</variation>
    <location>
        <position position="198"/>
    </location>
</feature>
<feature type="strand" evidence="7">
    <location>
        <begin position="37"/>
        <end position="39"/>
    </location>
</feature>
<feature type="helix" evidence="7">
    <location>
        <begin position="54"/>
        <end position="64"/>
    </location>
</feature>
<feature type="strand" evidence="7">
    <location>
        <begin position="70"/>
        <end position="76"/>
    </location>
</feature>
<feature type="helix" evidence="7">
    <location>
        <begin position="77"/>
        <end position="79"/>
    </location>
</feature>
<feature type="helix" evidence="7">
    <location>
        <begin position="81"/>
        <end position="83"/>
    </location>
</feature>
<feature type="helix" evidence="7">
    <location>
        <begin position="86"/>
        <end position="98"/>
    </location>
</feature>
<feature type="strand" evidence="7">
    <location>
        <begin position="104"/>
        <end position="109"/>
    </location>
</feature>
<feature type="helix" evidence="7">
    <location>
        <begin position="115"/>
        <end position="127"/>
    </location>
</feature>
<feature type="strand" evidence="7">
    <location>
        <begin position="131"/>
        <end position="136"/>
    </location>
</feature>
<feature type="helix" evidence="7">
    <location>
        <begin position="142"/>
        <end position="144"/>
    </location>
</feature>
<feature type="helix" evidence="7">
    <location>
        <begin position="147"/>
        <end position="160"/>
    </location>
</feature>
<feature type="strand" evidence="7">
    <location>
        <begin position="165"/>
        <end position="169"/>
    </location>
</feature>
<feature type="helix" evidence="7">
    <location>
        <begin position="171"/>
        <end position="174"/>
    </location>
</feature>
<feature type="helix" evidence="7">
    <location>
        <begin position="180"/>
        <end position="187"/>
    </location>
</feature>
<feature type="strand" evidence="7">
    <location>
        <begin position="192"/>
        <end position="197"/>
    </location>
</feature>
<feature type="helix" evidence="7">
    <location>
        <begin position="202"/>
        <end position="211"/>
    </location>
</feature>
<feature type="turn" evidence="7">
    <location>
        <begin position="212"/>
        <end position="214"/>
    </location>
</feature>
<feature type="strand" evidence="7">
    <location>
        <begin position="218"/>
        <end position="223"/>
    </location>
</feature>
<feature type="helix" evidence="7">
    <location>
        <begin position="224"/>
        <end position="226"/>
    </location>
</feature>
<feature type="helix" evidence="7">
    <location>
        <begin position="227"/>
        <end position="233"/>
    </location>
</feature>
<feature type="strand" evidence="7">
    <location>
        <begin position="237"/>
        <end position="239"/>
    </location>
</feature>
<feature type="helix" evidence="7">
    <location>
        <begin position="241"/>
        <end position="244"/>
    </location>
</feature>
<feature type="helix" evidence="7">
    <location>
        <begin position="247"/>
        <end position="258"/>
    </location>
</feature>
<feature type="helix" evidence="7">
    <location>
        <begin position="262"/>
        <end position="278"/>
    </location>
</feature>
<feature type="turn" evidence="7">
    <location>
        <begin position="279"/>
        <end position="283"/>
    </location>
</feature>
<feature type="helix" evidence="7">
    <location>
        <begin position="284"/>
        <end position="295"/>
    </location>
</feature>
<feature type="helix" evidence="7">
    <location>
        <begin position="311"/>
        <end position="322"/>
    </location>
</feature>
<feature type="turn" evidence="7">
    <location>
        <begin position="323"/>
        <end position="325"/>
    </location>
</feature>
<name>HOGA1_HUMAN</name>
<comment type="function">
    <text evidence="3 4">Catalyzes the final step in the metabolic pathway of hydroxyproline.</text>
</comment>
<comment type="catalytic activity">
    <reaction evidence="4">
        <text>(4S)-4-hydroxy-2-oxoglutarate = glyoxylate + pyruvate</text>
        <dbReference type="Rhea" id="RHEA:35639"/>
        <dbReference type="ChEBI" id="CHEBI:15361"/>
        <dbReference type="ChEBI" id="CHEBI:36655"/>
        <dbReference type="ChEBI" id="CHEBI:71685"/>
        <dbReference type="EC" id="4.1.3.16"/>
    </reaction>
</comment>
<comment type="catalytic activity">
    <reaction evidence="4">
        <text>(4R)-4-hydroxy-2-oxoglutarate = glyoxylate + pyruvate</text>
        <dbReference type="Rhea" id="RHEA:30687"/>
        <dbReference type="ChEBI" id="CHEBI:15361"/>
        <dbReference type="ChEBI" id="CHEBI:36655"/>
        <dbReference type="ChEBI" id="CHEBI:62213"/>
        <dbReference type="EC" id="4.1.3.16"/>
    </reaction>
</comment>
<comment type="activity regulation">
    <text evidence="1">Inhibited by divalent cations.</text>
</comment>
<comment type="subunit">
    <text evidence="1">Homotetramer.</text>
</comment>
<comment type="interaction">
    <interactant intactId="EBI-9658477">
        <id>Q86XE5</id>
    </interactant>
    <interactant intactId="EBI-12002088">
        <id>Q96PU9</id>
        <label>CIMAP1A</label>
    </interactant>
    <organismsDiffer>false</organismsDiffer>
    <experiments>3</experiments>
</comment>
<comment type="interaction">
    <interactant intactId="EBI-9658477">
        <id>Q86XE5</id>
    </interactant>
    <interactant intactId="EBI-4402938">
        <id>Q9NQZ5</id>
        <label>STARD7</label>
    </interactant>
    <organismsDiffer>false</organismsDiffer>
    <experiments>2</experiments>
</comment>
<comment type="interaction">
    <interactant intactId="EBI-9658477">
        <id>Q86XE5</id>
    </interactant>
    <interactant intactId="EBI-2514143">
        <id>Q96K76</id>
        <label>USP47</label>
    </interactant>
    <organismsDiffer>false</organismsDiffer>
    <experiments>3</experiments>
</comment>
<comment type="subcellular location">
    <subcellularLocation>
        <location evidence="2">Mitochondrion</location>
    </subcellularLocation>
</comment>
<comment type="alternative products">
    <event type="alternative splicing"/>
    <isoform>
        <id>Q86XE5-1</id>
        <name>1</name>
        <sequence type="displayed"/>
    </isoform>
    <isoform>
        <id>Q86XE5-3</id>
        <name>2</name>
        <sequence type="described" ref="VSP_022515"/>
    </isoform>
</comment>
<comment type="disease" evidence="3">
    <disease id="DI-02917">
        <name>Hyperoxaluria primary 3</name>
        <acronym>HP3</acronym>
        <description>A disorder phenotypically similar to hyperoxaluria type 1 and type 2. It is characterized by increase in urinary oxalate excretion and mild glycolic aciduria. Clinical manifestations include calcium oxalate urolithiasis, hematuria, pain, and/or urinary tract infection.</description>
        <dbReference type="MIM" id="613616"/>
    </disease>
    <text>The disease is caused by variants affecting the gene represented in this entry.</text>
</comment>
<comment type="similarity">
    <text evidence="6">Belongs to the DapA family.</text>
</comment>
<comment type="sequence caution" evidence="6">
    <conflict type="erroneous gene model prediction">
        <sequence resource="EMBL-CDS" id="CAC84901"/>
    </conflict>
</comment>
<proteinExistence type="evidence at protein level"/>